<feature type="chain" id="PRO_1000045552" description="Fumarate reductase subunit D">
    <location>
        <begin position="1"/>
        <end position="114"/>
    </location>
</feature>
<feature type="transmembrane region" description="Helical" evidence="1">
    <location>
        <begin position="24"/>
        <end position="44"/>
    </location>
</feature>
<feature type="transmembrane region" description="Helical" evidence="1">
    <location>
        <begin position="50"/>
        <end position="70"/>
    </location>
</feature>
<feature type="transmembrane region" description="Helical" evidence="1">
    <location>
        <begin position="92"/>
        <end position="112"/>
    </location>
</feature>
<sequence>MVDQNPKRSGEPPVWLMFGAGGTVSAIFLPVVILIIGLLLPFGLVNVHNLITFAYSWIGKLVILVLTIFPMWCGLHRIHHGMHDLKVHVPAGGFIFYGLATIYTVWVLFAVINL</sequence>
<gene>
    <name evidence="1" type="primary">frdD</name>
    <name type="ordered locus">CGSHiGG_07665</name>
</gene>
<proteinExistence type="inferred from homology"/>
<reference key="1">
    <citation type="journal article" date="2007" name="Genome Biol.">
        <title>Characterization and modeling of the Haemophilus influenzae core and supragenomes based on the complete genomic sequences of Rd and 12 clinical nontypeable strains.</title>
        <authorList>
            <person name="Hogg J.S."/>
            <person name="Hu F.Z."/>
            <person name="Janto B."/>
            <person name="Boissy R."/>
            <person name="Hayes J."/>
            <person name="Keefe R."/>
            <person name="Post J.C."/>
            <person name="Ehrlich G.D."/>
        </authorList>
    </citation>
    <scope>NUCLEOTIDE SEQUENCE [LARGE SCALE GENOMIC DNA]</scope>
    <source>
        <strain>PittGG</strain>
    </source>
</reference>
<name>FRDD_HAEIG</name>
<keyword id="KW-0997">Cell inner membrane</keyword>
<keyword id="KW-1003">Cell membrane</keyword>
<keyword id="KW-0472">Membrane</keyword>
<keyword id="KW-0812">Transmembrane</keyword>
<keyword id="KW-1133">Transmembrane helix</keyword>
<protein>
    <recommendedName>
        <fullName evidence="1">Fumarate reductase subunit D</fullName>
    </recommendedName>
    <alternativeName>
        <fullName evidence="1">Quinol-fumarate reductase subunit D</fullName>
        <shortName evidence="1">QFR subunit D</shortName>
    </alternativeName>
</protein>
<organism>
    <name type="scientific">Haemophilus influenzae (strain PittGG)</name>
    <dbReference type="NCBI Taxonomy" id="374931"/>
    <lineage>
        <taxon>Bacteria</taxon>
        <taxon>Pseudomonadati</taxon>
        <taxon>Pseudomonadota</taxon>
        <taxon>Gammaproteobacteria</taxon>
        <taxon>Pasteurellales</taxon>
        <taxon>Pasteurellaceae</taxon>
        <taxon>Haemophilus</taxon>
    </lineage>
</organism>
<comment type="function">
    <text evidence="1">Anchors the catalytic components of the fumarate reductase complex to the cell membrane, binds quinones.</text>
</comment>
<comment type="subunit">
    <text evidence="1">Part of an enzyme complex containing four subunits: a flavoprotein (FrdA), an iron-sulfur protein (FrdB), and two hydrophobic anchor proteins (FrdC and FrdD).</text>
</comment>
<comment type="subcellular location">
    <subcellularLocation>
        <location evidence="1">Cell inner membrane</location>
        <topology evidence="1">Multi-pass membrane protein</topology>
    </subcellularLocation>
</comment>
<comment type="similarity">
    <text evidence="1">Belongs to the FrdD family.</text>
</comment>
<evidence type="ECO:0000255" key="1">
    <source>
        <dbReference type="HAMAP-Rule" id="MF_00709"/>
    </source>
</evidence>
<dbReference type="EMBL" id="CP000672">
    <property type="protein sequence ID" value="ABR00388.1"/>
    <property type="molecule type" value="Genomic_DNA"/>
</dbReference>
<dbReference type="SMR" id="A5UHY2"/>
<dbReference type="KEGG" id="hiq:CGSHiGG_07665"/>
<dbReference type="HOGENOM" id="CLU_168367_0_0_6"/>
<dbReference type="Proteomes" id="UP000001990">
    <property type="component" value="Chromosome"/>
</dbReference>
<dbReference type="GO" id="GO:0045283">
    <property type="term" value="C:fumarate reductase complex"/>
    <property type="evidence" value="ECO:0007669"/>
    <property type="project" value="UniProtKB-UniRule"/>
</dbReference>
<dbReference type="GO" id="GO:0005886">
    <property type="term" value="C:plasma membrane"/>
    <property type="evidence" value="ECO:0007669"/>
    <property type="project" value="UniProtKB-SubCell"/>
</dbReference>
<dbReference type="GO" id="GO:0000104">
    <property type="term" value="F:succinate dehydrogenase activity"/>
    <property type="evidence" value="ECO:0007669"/>
    <property type="project" value="UniProtKB-UniRule"/>
</dbReference>
<dbReference type="GO" id="GO:0006106">
    <property type="term" value="P:fumarate metabolic process"/>
    <property type="evidence" value="ECO:0007669"/>
    <property type="project" value="InterPro"/>
</dbReference>
<dbReference type="CDD" id="cd00547">
    <property type="entry name" value="QFR_TypeD_subunitD"/>
    <property type="match status" value="1"/>
</dbReference>
<dbReference type="Gene3D" id="1.20.1300.10">
    <property type="entry name" value="Fumarate reductase/succinate dehydrogenase, transmembrane subunit"/>
    <property type="match status" value="1"/>
</dbReference>
<dbReference type="HAMAP" id="MF_00709">
    <property type="entry name" value="Fumarate_red_D"/>
    <property type="match status" value="1"/>
</dbReference>
<dbReference type="InterPro" id="IPR003418">
    <property type="entry name" value="Fumarate_red_D"/>
</dbReference>
<dbReference type="InterPro" id="IPR034804">
    <property type="entry name" value="SQR/QFR_C/D"/>
</dbReference>
<dbReference type="NCBIfam" id="NF003977">
    <property type="entry name" value="PRK05470.1-1"/>
    <property type="match status" value="1"/>
</dbReference>
<dbReference type="Pfam" id="PF02313">
    <property type="entry name" value="Fumarate_red_D"/>
    <property type="match status" value="1"/>
</dbReference>
<dbReference type="PIRSF" id="PIRSF000179">
    <property type="entry name" value="FrdD"/>
    <property type="match status" value="1"/>
</dbReference>
<dbReference type="SUPFAM" id="SSF81343">
    <property type="entry name" value="Fumarate reductase respiratory complex transmembrane subunits"/>
    <property type="match status" value="1"/>
</dbReference>
<accession>A5UHY2</accession>